<protein>
    <recommendedName>
        <fullName>Formin-homology and zinc finger domains protein 1</fullName>
    </recommendedName>
</protein>
<proteinExistence type="evidence at transcript level"/>
<keyword id="KW-1185">Reference proteome</keyword>
<keyword id="KW-0732">Signal</keyword>
<name>FOZI1_CAEEL</name>
<organism>
    <name type="scientific">Caenorhabditis elegans</name>
    <dbReference type="NCBI Taxonomy" id="6239"/>
    <lineage>
        <taxon>Eukaryota</taxon>
        <taxon>Metazoa</taxon>
        <taxon>Ecdysozoa</taxon>
        <taxon>Nematoda</taxon>
        <taxon>Chromadorea</taxon>
        <taxon>Rhabditida</taxon>
        <taxon>Rhabditina</taxon>
        <taxon>Rhabditomorpha</taxon>
        <taxon>Rhabditoidea</taxon>
        <taxon>Rhabditidae</taxon>
        <taxon>Peloderinae</taxon>
        <taxon>Caenorhabditis</taxon>
    </lineage>
</organism>
<gene>
    <name evidence="6" type="primary">fozi-1</name>
    <name evidence="6" type="ORF">K01B6.1</name>
</gene>
<sequence length="732" mass="81848">MMLASSAPTAPSLLPPSSQPSAATTRADDCSSSTSPTNTSASDASMEMLTSLMNGAVAAAAAPGNALVKQESPPLTTPPLFNPDLALLQFSQLFQAQQAMVQFHNQQKQQQQIIQQQQQQQQQQQQNQNPSQSQSSSSDRKRSYPCTFQYCVICQKDVHSSKLPCHIRQCHVAKPMFQCPACDFTSTYSKNNVKSHMVSLHGLAGDPISYMDKYAGQVEEFMKLCFPNVRGRGRPMQGRSSPKSPTSPTQPGRRGSQASSLPSRRNTVSQNDLLATLQQHQQQQAAFHPLRNLRFNPLQSIFPAVLANNNNNSVLATNKHVNNFLIKQEESEVPPITMPMQDLKTMLDANSSPSPISLSSSIIPIQPIKPGENAQPKYMKSLDWTILNDLQMKGTVFADCRSNMELYAENIARKIENTKAFQSFVLSDDMRTVVEEVRSRVSIQLFEVMFAIHRMDIKVLNQNLVDSLLQIAPTNSDAQLLRKMENLSDPNEEFLLGLTKIDHIEEKLETMKHMYRFPEQVELLKENIIKYEIAVKVLSESRALRNVMQLVLAILNIGFFDDRQCLSINGFSVSDISSILSTNTPSGQSVQSILVTILKDEINLDLDELFGLIDVLEKIENDDVNSVAQDLMVLDDKTVRAEKEMEHSGSNIPLSEFVENAKTISKERWEHFKSLKTSIERLTIYLGSPLPRHQNLDAHSPFNNVLQMLRSLKTAIELDDASDDHHINVSSP</sequence>
<comment type="function">
    <text evidence="4">Acts redundantly with hlh-1 to promote body wall muscle cell and coelomocyte specification in postembryonic mesoderm progenitors, probably through suppression of sem-2.</text>
</comment>
<comment type="tissue specificity">
    <text evidence="4">Transiently expressed in all mesoderm derived progenitor body wall muscle cells before they differentiate.</text>
</comment>
<comment type="developmental stage">
    <text evidence="4">Expressed in sex myoblasts at the 16-M cell and 18-M cell stages of mesoderm development in hermaphrodite larvae.</text>
</comment>
<comment type="disruption phenotype">
    <text evidence="4">Double RNAi-mediated knockdown with sem-2 results in no sex myoblast production.</text>
</comment>
<comment type="similarity">
    <text evidence="5">Belongs to the formin homology family.</text>
</comment>
<dbReference type="EMBL" id="Z22174">
    <property type="protein sequence ID" value="CAA80128.1"/>
    <property type="molecule type" value="Genomic_DNA"/>
</dbReference>
<dbReference type="PIR" id="S40759">
    <property type="entry name" value="S40759"/>
</dbReference>
<dbReference type="RefSeq" id="NP_001379050.1">
    <property type="nucleotide sequence ID" value="NM_001392173.1"/>
</dbReference>
<dbReference type="RefSeq" id="NP_499047.1">
    <property type="nucleotide sequence ID" value="NM_066646.3"/>
</dbReference>
<dbReference type="SMR" id="P34489"/>
<dbReference type="BioGRID" id="41506">
    <property type="interactions" value="30"/>
</dbReference>
<dbReference type="DIP" id="DIP-27437N"/>
<dbReference type="FunCoup" id="P34489">
    <property type="interactions" value="538"/>
</dbReference>
<dbReference type="IntAct" id="P34489">
    <property type="interactions" value="28"/>
</dbReference>
<dbReference type="STRING" id="6239.K01B6.1.1"/>
<dbReference type="PaxDb" id="6239-K01B6.1"/>
<dbReference type="EnsemblMetazoa" id="K01B6.1.1">
    <property type="protein sequence ID" value="K01B6.1.1"/>
    <property type="gene ID" value="WBGene00010453"/>
</dbReference>
<dbReference type="EnsemblMetazoa" id="K01B6.1.2">
    <property type="protein sequence ID" value="K01B6.1.2"/>
    <property type="gene ID" value="WBGene00010453"/>
</dbReference>
<dbReference type="EnsemblMetazoa" id="K01B6.1.3">
    <property type="protein sequence ID" value="K01B6.1.3"/>
    <property type="gene ID" value="WBGene00010453"/>
</dbReference>
<dbReference type="GeneID" id="176308"/>
<dbReference type="UCSC" id="K01B6.1">
    <property type="organism name" value="c. elegans"/>
</dbReference>
<dbReference type="AGR" id="WB:WBGene00010453"/>
<dbReference type="WormBase" id="K01B6.1">
    <property type="protein sequence ID" value="CE00238"/>
    <property type="gene ID" value="WBGene00010453"/>
    <property type="gene designation" value="fozi-1"/>
</dbReference>
<dbReference type="eggNOG" id="KOG1923">
    <property type="taxonomic scope" value="Eukaryota"/>
</dbReference>
<dbReference type="HOGENOM" id="CLU_372662_0_0_1"/>
<dbReference type="InParanoid" id="P34489"/>
<dbReference type="OMA" id="EVMFAIH"/>
<dbReference type="OrthoDB" id="1668162at2759"/>
<dbReference type="Reactome" id="R-CEL-5663220">
    <property type="pathway name" value="RHO GTPases Activate Formins"/>
</dbReference>
<dbReference type="Reactome" id="R-CEL-8980692">
    <property type="pathway name" value="RHOA GTPase cycle"/>
</dbReference>
<dbReference type="Reactome" id="R-CEL-9013149">
    <property type="pathway name" value="RAC1 GTPase cycle"/>
</dbReference>
<dbReference type="SignaLink" id="P34489"/>
<dbReference type="PRO" id="PR:P34489"/>
<dbReference type="Proteomes" id="UP000001940">
    <property type="component" value="Chromosome III"/>
</dbReference>
<dbReference type="Bgee" id="WBGene00010453">
    <property type="expression patterns" value="Expressed in larva and 3 other cell types or tissues"/>
</dbReference>
<dbReference type="GO" id="GO:0005829">
    <property type="term" value="C:cytosol"/>
    <property type="evidence" value="ECO:0000318"/>
    <property type="project" value="GO_Central"/>
</dbReference>
<dbReference type="GO" id="GO:0005634">
    <property type="term" value="C:nucleus"/>
    <property type="evidence" value="ECO:0000314"/>
    <property type="project" value="WormBase"/>
</dbReference>
<dbReference type="GO" id="GO:0051015">
    <property type="term" value="F:actin filament binding"/>
    <property type="evidence" value="ECO:0000318"/>
    <property type="project" value="GO_Central"/>
</dbReference>
<dbReference type="GO" id="GO:0016477">
    <property type="term" value="P:cell migration"/>
    <property type="evidence" value="ECO:0000318"/>
    <property type="project" value="GO_Central"/>
</dbReference>
<dbReference type="GO" id="GO:0030866">
    <property type="term" value="P:cortical actin cytoskeleton organization"/>
    <property type="evidence" value="ECO:0000318"/>
    <property type="project" value="GO_Central"/>
</dbReference>
<dbReference type="GO" id="GO:0007501">
    <property type="term" value="P:mesodermal cell fate specification"/>
    <property type="evidence" value="ECO:0000314"/>
    <property type="project" value="UniProtKB"/>
</dbReference>
<dbReference type="GO" id="GO:0048337">
    <property type="term" value="P:positive regulation of mesodermal cell fate specification"/>
    <property type="evidence" value="ECO:0000316"/>
    <property type="project" value="UniProtKB"/>
</dbReference>
<dbReference type="GO" id="GO:0008360">
    <property type="term" value="P:regulation of cell shape"/>
    <property type="evidence" value="ECO:0000318"/>
    <property type="project" value="GO_Central"/>
</dbReference>
<dbReference type="Gene3D" id="3.30.160.60">
    <property type="entry name" value="Classic Zinc Finger"/>
    <property type="match status" value="1"/>
</dbReference>
<dbReference type="Gene3D" id="1.20.58.2220">
    <property type="entry name" value="Formin, FH2 domain"/>
    <property type="match status" value="1"/>
</dbReference>
<dbReference type="InterPro" id="IPR015425">
    <property type="entry name" value="FH2_Formin"/>
</dbReference>
<dbReference type="InterPro" id="IPR042201">
    <property type="entry name" value="FH2_Formin_sf"/>
</dbReference>
<dbReference type="InterPro" id="IPR043592">
    <property type="entry name" value="FMNL_animal"/>
</dbReference>
<dbReference type="PANTHER" id="PTHR45857:SF8">
    <property type="entry name" value="FORMIN-HOMOLOGY AND ZINC FINGER DOMAINS PROTEIN 1"/>
    <property type="match status" value="1"/>
</dbReference>
<dbReference type="PANTHER" id="PTHR45857">
    <property type="entry name" value="FORMIN-LIKE PROTEIN"/>
    <property type="match status" value="1"/>
</dbReference>
<dbReference type="Pfam" id="PF02181">
    <property type="entry name" value="FH2"/>
    <property type="match status" value="1"/>
</dbReference>
<dbReference type="SMART" id="SM00498">
    <property type="entry name" value="FH2"/>
    <property type="match status" value="1"/>
</dbReference>
<dbReference type="SUPFAM" id="SSF101447">
    <property type="entry name" value="Formin homology 2 domain (FH2 domain)"/>
    <property type="match status" value="1"/>
</dbReference>
<dbReference type="PROSITE" id="PS51444">
    <property type="entry name" value="FH2"/>
    <property type="match status" value="1"/>
</dbReference>
<evidence type="ECO:0000255" key="1"/>
<evidence type="ECO:0000255" key="2">
    <source>
        <dbReference type="PROSITE-ProRule" id="PRU00774"/>
    </source>
</evidence>
<evidence type="ECO:0000256" key="3">
    <source>
        <dbReference type="SAM" id="MobiDB-lite"/>
    </source>
</evidence>
<evidence type="ECO:0000269" key="4">
    <source>
    </source>
</evidence>
<evidence type="ECO:0000305" key="5"/>
<evidence type="ECO:0000312" key="6">
    <source>
        <dbReference type="WormBase" id="K01B6.1"/>
    </source>
</evidence>
<accession>P34489</accession>
<reference key="1">
    <citation type="journal article" date="1994" name="Nature">
        <title>2.2 Mb of contiguous nucleotide sequence from chromosome III of C. elegans.</title>
        <authorList>
            <person name="Wilson R."/>
            <person name="Ainscough R."/>
            <person name="Anderson K."/>
            <person name="Baynes C."/>
            <person name="Berks M."/>
            <person name="Bonfield J."/>
            <person name="Burton J."/>
            <person name="Connell M."/>
            <person name="Copsey T."/>
            <person name="Cooper J."/>
            <person name="Coulson A."/>
            <person name="Craxton M."/>
            <person name="Dear S."/>
            <person name="Du Z."/>
            <person name="Durbin R."/>
            <person name="Favello A."/>
            <person name="Fraser A."/>
            <person name="Fulton L."/>
            <person name="Gardner A."/>
            <person name="Green P."/>
            <person name="Hawkins T."/>
            <person name="Hillier L."/>
            <person name="Jier M."/>
            <person name="Johnston L."/>
            <person name="Jones M."/>
            <person name="Kershaw J."/>
            <person name="Kirsten J."/>
            <person name="Laisster N."/>
            <person name="Latreille P."/>
            <person name="Lightning J."/>
            <person name="Lloyd C."/>
            <person name="Mortimore B."/>
            <person name="O'Callaghan M."/>
            <person name="Parsons J."/>
            <person name="Percy C."/>
            <person name="Rifken L."/>
            <person name="Roopra A."/>
            <person name="Saunders D."/>
            <person name="Shownkeen R."/>
            <person name="Sims M."/>
            <person name="Smaldon N."/>
            <person name="Smith A."/>
            <person name="Smith M."/>
            <person name="Sonnhammer E."/>
            <person name="Staden R."/>
            <person name="Sulston J."/>
            <person name="Thierry-Mieg J."/>
            <person name="Thomas K."/>
            <person name="Vaudin M."/>
            <person name="Vaughan K."/>
            <person name="Waterston R."/>
            <person name="Watson A."/>
            <person name="Weinstock L."/>
            <person name="Wilkinson-Sproat J."/>
            <person name="Wohldman P."/>
        </authorList>
    </citation>
    <scope>NUCLEOTIDE SEQUENCE [LARGE SCALE GENOMIC DNA]</scope>
    <source>
        <strain>Bristol N2</strain>
    </source>
</reference>
<reference key="2">
    <citation type="journal article" date="1998" name="Science">
        <title>Genome sequence of the nematode C. elegans: a platform for investigating biology.</title>
        <authorList>
            <consortium name="The C. elegans sequencing consortium"/>
        </authorList>
    </citation>
    <scope>NUCLEOTIDE SEQUENCE [LARGE SCALE GENOMIC DNA]</scope>
    <source>
        <strain>Bristol N2</strain>
    </source>
</reference>
<reference key="3">
    <citation type="journal article" date="2011" name="Development">
        <title>The C. elegans SoxC protein SEM-2 opposes differentiation factors to promote a proliferative blast cell fate in the postembryonic mesoderm.</title>
        <authorList>
            <person name="Tian C."/>
            <person name="Shi H."/>
            <person name="Colledge C."/>
            <person name="Stern M."/>
            <person name="Waterston R."/>
            <person name="Liu J."/>
        </authorList>
    </citation>
    <scope>FUNCTION</scope>
    <scope>TISSUE SPECIFICITY</scope>
    <scope>DEVELOPMENTAL STAGE</scope>
    <scope>DISRUPTION PHENOTYPE</scope>
</reference>
<feature type="signal peptide" evidence="1">
    <location>
        <begin position="1"/>
        <end position="27"/>
    </location>
</feature>
<feature type="chain" id="PRO_0000065392" description="Formin-homology and zinc finger domains protein 1">
    <location>
        <begin position="28"/>
        <end position="732"/>
    </location>
</feature>
<feature type="domain" description="FH2" evidence="2">
    <location>
        <begin position="355"/>
        <end position="732"/>
    </location>
</feature>
<feature type="region of interest" description="Disordered" evidence="3">
    <location>
        <begin position="1"/>
        <end position="45"/>
    </location>
</feature>
<feature type="region of interest" description="Disordered" evidence="3">
    <location>
        <begin position="121"/>
        <end position="141"/>
    </location>
</feature>
<feature type="region of interest" description="Disordered" evidence="3">
    <location>
        <begin position="232"/>
        <end position="267"/>
    </location>
</feature>
<feature type="compositionally biased region" description="Low complexity" evidence="3">
    <location>
        <begin position="1"/>
        <end position="12"/>
    </location>
</feature>
<feature type="compositionally biased region" description="Low complexity" evidence="3">
    <location>
        <begin position="19"/>
        <end position="45"/>
    </location>
</feature>
<feature type="compositionally biased region" description="Low complexity" evidence="3">
    <location>
        <begin position="121"/>
        <end position="137"/>
    </location>
</feature>
<feature type="compositionally biased region" description="Low complexity" evidence="3">
    <location>
        <begin position="240"/>
        <end position="251"/>
    </location>
</feature>
<feature type="compositionally biased region" description="Polar residues" evidence="3">
    <location>
        <begin position="256"/>
        <end position="267"/>
    </location>
</feature>